<proteinExistence type="inferred from homology"/>
<dbReference type="EMBL" id="CP000240">
    <property type="protein sequence ID" value="ABD03816.1"/>
    <property type="molecule type" value="Genomic_DNA"/>
</dbReference>
<dbReference type="RefSeq" id="WP_011434435.1">
    <property type="nucleotide sequence ID" value="NC_007776.1"/>
</dbReference>
<dbReference type="SMR" id="Q2JHW2"/>
<dbReference type="STRING" id="321332.CYB_2897"/>
<dbReference type="KEGG" id="cyb:CYB_2897"/>
<dbReference type="eggNOG" id="COG0233">
    <property type="taxonomic scope" value="Bacteria"/>
</dbReference>
<dbReference type="HOGENOM" id="CLU_073981_2_0_3"/>
<dbReference type="OrthoDB" id="9804006at2"/>
<dbReference type="Proteomes" id="UP000001938">
    <property type="component" value="Chromosome"/>
</dbReference>
<dbReference type="GO" id="GO:0005737">
    <property type="term" value="C:cytoplasm"/>
    <property type="evidence" value="ECO:0007669"/>
    <property type="project" value="UniProtKB-SubCell"/>
</dbReference>
<dbReference type="GO" id="GO:0043023">
    <property type="term" value="F:ribosomal large subunit binding"/>
    <property type="evidence" value="ECO:0007669"/>
    <property type="project" value="TreeGrafter"/>
</dbReference>
<dbReference type="GO" id="GO:0006415">
    <property type="term" value="P:translational termination"/>
    <property type="evidence" value="ECO:0007669"/>
    <property type="project" value="UniProtKB-UniRule"/>
</dbReference>
<dbReference type="CDD" id="cd00520">
    <property type="entry name" value="RRF"/>
    <property type="match status" value="1"/>
</dbReference>
<dbReference type="FunFam" id="1.10.132.20:FF:000001">
    <property type="entry name" value="Ribosome-recycling factor"/>
    <property type="match status" value="1"/>
</dbReference>
<dbReference type="FunFam" id="3.30.1360.40:FF:000001">
    <property type="entry name" value="Ribosome-recycling factor"/>
    <property type="match status" value="1"/>
</dbReference>
<dbReference type="Gene3D" id="3.30.1360.40">
    <property type="match status" value="1"/>
</dbReference>
<dbReference type="Gene3D" id="1.10.132.20">
    <property type="entry name" value="Ribosome-recycling factor"/>
    <property type="match status" value="1"/>
</dbReference>
<dbReference type="HAMAP" id="MF_00040">
    <property type="entry name" value="RRF"/>
    <property type="match status" value="1"/>
</dbReference>
<dbReference type="InterPro" id="IPR002661">
    <property type="entry name" value="Ribosome_recyc_fac"/>
</dbReference>
<dbReference type="InterPro" id="IPR023584">
    <property type="entry name" value="Ribosome_recyc_fac_dom"/>
</dbReference>
<dbReference type="InterPro" id="IPR036191">
    <property type="entry name" value="RRF_sf"/>
</dbReference>
<dbReference type="NCBIfam" id="TIGR00496">
    <property type="entry name" value="frr"/>
    <property type="match status" value="1"/>
</dbReference>
<dbReference type="PANTHER" id="PTHR20982:SF3">
    <property type="entry name" value="MITOCHONDRIAL RIBOSOME RECYCLING FACTOR PSEUDO 1"/>
    <property type="match status" value="1"/>
</dbReference>
<dbReference type="PANTHER" id="PTHR20982">
    <property type="entry name" value="RIBOSOME RECYCLING FACTOR"/>
    <property type="match status" value="1"/>
</dbReference>
<dbReference type="Pfam" id="PF01765">
    <property type="entry name" value="RRF"/>
    <property type="match status" value="1"/>
</dbReference>
<dbReference type="SUPFAM" id="SSF55194">
    <property type="entry name" value="Ribosome recycling factor, RRF"/>
    <property type="match status" value="1"/>
</dbReference>
<name>RRF_SYNJB</name>
<accession>Q2JHW2</accession>
<sequence length="182" mass="20391">MELAEIEELMNKAVQATQRSFNTVRTGRANSSLLDRIQVEYYGVPTPLKALASLTTPDSSTLLIQPFDPSTLAAIERAIVASDLGLTPSNDGKVVRLTIPPLTEERRKELSKQVAKLAEEGRVSIRNIRRDGIDSVRKREKNGELSEDESKSLQDDIQKLTDRYIKKIDELLAEKEKELTTL</sequence>
<evidence type="ECO:0000255" key="1">
    <source>
        <dbReference type="HAMAP-Rule" id="MF_00040"/>
    </source>
</evidence>
<feature type="chain" id="PRO_1000003295" description="Ribosome-recycling factor">
    <location>
        <begin position="1"/>
        <end position="182"/>
    </location>
</feature>
<protein>
    <recommendedName>
        <fullName evidence="1">Ribosome-recycling factor</fullName>
        <shortName evidence="1">RRF</shortName>
    </recommendedName>
    <alternativeName>
        <fullName evidence="1">Ribosome-releasing factor</fullName>
    </alternativeName>
</protein>
<keyword id="KW-0963">Cytoplasm</keyword>
<keyword id="KW-0648">Protein biosynthesis</keyword>
<keyword id="KW-1185">Reference proteome</keyword>
<comment type="function">
    <text evidence="1">Responsible for the release of ribosomes from messenger RNA at the termination of protein biosynthesis. May increase the efficiency of translation by recycling ribosomes from one round of translation to another.</text>
</comment>
<comment type="subcellular location">
    <subcellularLocation>
        <location evidence="1">Cytoplasm</location>
    </subcellularLocation>
</comment>
<comment type="similarity">
    <text evidence="1">Belongs to the RRF family.</text>
</comment>
<reference key="1">
    <citation type="journal article" date="2007" name="ISME J.">
        <title>Population level functional diversity in a microbial community revealed by comparative genomic and metagenomic analyses.</title>
        <authorList>
            <person name="Bhaya D."/>
            <person name="Grossman A.R."/>
            <person name="Steunou A.-S."/>
            <person name="Khuri N."/>
            <person name="Cohan F.M."/>
            <person name="Hamamura N."/>
            <person name="Melendrez M.C."/>
            <person name="Bateson M.M."/>
            <person name="Ward D.M."/>
            <person name="Heidelberg J.F."/>
        </authorList>
    </citation>
    <scope>NUCLEOTIDE SEQUENCE [LARGE SCALE GENOMIC DNA]</scope>
    <source>
        <strain>JA-2-3B'a(2-13)</strain>
    </source>
</reference>
<gene>
    <name evidence="1" type="primary">frr</name>
    <name type="ordered locus">CYB_2897</name>
</gene>
<organism>
    <name type="scientific">Synechococcus sp. (strain JA-2-3B'a(2-13))</name>
    <name type="common">Cyanobacteria bacterium Yellowstone B-Prime</name>
    <dbReference type="NCBI Taxonomy" id="321332"/>
    <lineage>
        <taxon>Bacteria</taxon>
        <taxon>Bacillati</taxon>
        <taxon>Cyanobacteriota</taxon>
        <taxon>Cyanophyceae</taxon>
        <taxon>Synechococcales</taxon>
        <taxon>Synechococcaceae</taxon>
        <taxon>Synechococcus</taxon>
    </lineage>
</organism>